<dbReference type="EC" id="1.13.11.11" evidence="1"/>
<dbReference type="EMBL" id="CH954180">
    <property type="protein sequence ID" value="EDV46114.1"/>
    <property type="molecule type" value="Genomic_DNA"/>
</dbReference>
<dbReference type="SMR" id="B3NVC6"/>
<dbReference type="EnsemblMetazoa" id="FBtr0138434">
    <property type="protein sequence ID" value="FBpp0136926"/>
    <property type="gene ID" value="FBgn0110596"/>
</dbReference>
<dbReference type="EnsemblMetazoa" id="XM_001977151.3">
    <property type="protein sequence ID" value="XP_001977187.1"/>
    <property type="gene ID" value="LOC6551492"/>
</dbReference>
<dbReference type="GeneID" id="6551492"/>
<dbReference type="KEGG" id="der:6551492"/>
<dbReference type="CTD" id="136040130"/>
<dbReference type="eggNOG" id="KOG3906">
    <property type="taxonomic scope" value="Eukaryota"/>
</dbReference>
<dbReference type="HOGENOM" id="CLU_045599_1_1_1"/>
<dbReference type="OMA" id="WRWRNDH"/>
<dbReference type="OrthoDB" id="447477at2759"/>
<dbReference type="PhylomeDB" id="B3NVC6"/>
<dbReference type="UniPathway" id="UPA00271"/>
<dbReference type="UniPathway" id="UPA00333">
    <property type="reaction ID" value="UER00453"/>
</dbReference>
<dbReference type="Proteomes" id="UP000008711">
    <property type="component" value="Unassembled WGS sequence"/>
</dbReference>
<dbReference type="GO" id="GO:0020037">
    <property type="term" value="F:heme binding"/>
    <property type="evidence" value="ECO:0000250"/>
    <property type="project" value="UniProtKB"/>
</dbReference>
<dbReference type="GO" id="GO:0046872">
    <property type="term" value="F:metal ion binding"/>
    <property type="evidence" value="ECO:0007669"/>
    <property type="project" value="UniProtKB-KW"/>
</dbReference>
<dbReference type="GO" id="GO:0004833">
    <property type="term" value="F:tryptophan 2,3-dioxygenase activity"/>
    <property type="evidence" value="ECO:0000250"/>
    <property type="project" value="UniProtKB"/>
</dbReference>
<dbReference type="GO" id="GO:0019442">
    <property type="term" value="P:L-tryptophan catabolic process to acetyl-CoA"/>
    <property type="evidence" value="ECO:0007669"/>
    <property type="project" value="TreeGrafter"/>
</dbReference>
<dbReference type="GO" id="GO:0019441">
    <property type="term" value="P:L-tryptophan catabolic process to kynurenine"/>
    <property type="evidence" value="ECO:0000250"/>
    <property type="project" value="UniProtKB"/>
</dbReference>
<dbReference type="GO" id="GO:0006727">
    <property type="term" value="P:ommochrome biosynthetic process"/>
    <property type="evidence" value="ECO:0007669"/>
    <property type="project" value="UniProtKB-UniRule"/>
</dbReference>
<dbReference type="GO" id="GO:0051289">
    <property type="term" value="P:protein homotetramerization"/>
    <property type="evidence" value="ECO:0007669"/>
    <property type="project" value="EnsemblMetazoa"/>
</dbReference>
<dbReference type="FunFam" id="1.10.287.3810:FF:000001">
    <property type="entry name" value="Tryptophan 2,3-dioxygenase"/>
    <property type="match status" value="1"/>
</dbReference>
<dbReference type="Gene3D" id="1.10.287.3810">
    <property type="match status" value="1"/>
</dbReference>
<dbReference type="Gene3D" id="1.20.58.480">
    <property type="match status" value="1"/>
</dbReference>
<dbReference type="HAMAP" id="MF_01972">
    <property type="entry name" value="T23O"/>
    <property type="match status" value="1"/>
</dbReference>
<dbReference type="InterPro" id="IPR037217">
    <property type="entry name" value="Trp/Indoleamine_2_3_dOase-like"/>
</dbReference>
<dbReference type="InterPro" id="IPR004981">
    <property type="entry name" value="Trp_2_3_dOase"/>
</dbReference>
<dbReference type="PANTHER" id="PTHR10138">
    <property type="entry name" value="TRYPTOPHAN 2,3-DIOXYGENASE"/>
    <property type="match status" value="1"/>
</dbReference>
<dbReference type="PANTHER" id="PTHR10138:SF0">
    <property type="entry name" value="TRYPTOPHAN 2,3-DIOXYGENASE"/>
    <property type="match status" value="1"/>
</dbReference>
<dbReference type="Pfam" id="PF03301">
    <property type="entry name" value="Trp_dioxygenase"/>
    <property type="match status" value="1"/>
</dbReference>
<dbReference type="SUPFAM" id="SSF140959">
    <property type="entry name" value="Indolic compounds 2,3-dioxygenase-like"/>
    <property type="match status" value="1"/>
</dbReference>
<protein>
    <recommendedName>
        <fullName evidence="1">Tryptophan 2,3-dioxygenase</fullName>
        <shortName evidence="1">TDO</shortName>
        <ecNumber evidence="1">1.13.11.11</ecNumber>
    </recommendedName>
    <alternativeName>
        <fullName evidence="1">Protein vermilion</fullName>
    </alternativeName>
    <alternativeName>
        <fullName evidence="1">Tryptamin 2,3-dioxygenase</fullName>
    </alternativeName>
    <alternativeName>
        <fullName evidence="1">Tryptophan oxygenase</fullName>
        <shortName evidence="1">TO</shortName>
        <shortName evidence="1">TRPO</shortName>
    </alternativeName>
    <alternativeName>
        <fullName evidence="1">Tryptophan pyrrolase</fullName>
    </alternativeName>
    <alternativeName>
        <fullName evidence="1">Tryptophanase</fullName>
    </alternativeName>
</protein>
<keyword id="KW-0223">Dioxygenase</keyword>
<keyword id="KW-0349">Heme</keyword>
<keyword id="KW-0408">Iron</keyword>
<keyword id="KW-0479">Metal-binding</keyword>
<keyword id="KW-0560">Oxidoreductase</keyword>
<keyword id="KW-0823">Tryptophan catabolism</keyword>
<reference key="1">
    <citation type="journal article" date="2007" name="Nature">
        <title>Evolution of genes and genomes on the Drosophila phylogeny.</title>
        <authorList>
            <consortium name="Drosophila 12 genomes consortium"/>
        </authorList>
    </citation>
    <scope>NUCLEOTIDE SEQUENCE [LARGE SCALE GENOMIC DNA]</scope>
    <source>
        <strain>Tucson 14021-0224.01</strain>
    </source>
</reference>
<proteinExistence type="inferred from homology"/>
<comment type="function">
    <text evidence="1">Heme-dependent dioxygenase that catalyzes the oxidative cleavage of the L-tryptophan (L-Trp) pyrrole ring and converts L-tryptophan to N-formyl-L-kynurenine. Catalyzes the oxidative cleavage of the indole moiety.</text>
</comment>
<comment type="catalytic activity">
    <reaction evidence="1">
        <text>L-tryptophan + O2 = N-formyl-L-kynurenine</text>
        <dbReference type="Rhea" id="RHEA:24536"/>
        <dbReference type="ChEBI" id="CHEBI:15379"/>
        <dbReference type="ChEBI" id="CHEBI:57912"/>
        <dbReference type="ChEBI" id="CHEBI:58629"/>
        <dbReference type="EC" id="1.13.11.11"/>
    </reaction>
</comment>
<comment type="cofactor">
    <cofactor evidence="1">
        <name>heme</name>
        <dbReference type="ChEBI" id="CHEBI:30413"/>
    </cofactor>
    <text evidence="1">Binds 1 heme group per subunit.</text>
</comment>
<comment type="pathway">
    <text evidence="1">Amino-acid degradation; L-tryptophan degradation via kynurenine pathway; L-kynurenine from L-tryptophan: step 1/2.</text>
</comment>
<comment type="pathway">
    <text evidence="1">Pigment biosynthesis; ommochrome biosynthesis.</text>
</comment>
<comment type="subunit">
    <text evidence="1">Homotetramer. Dimer of dimers.</text>
</comment>
<comment type="similarity">
    <text evidence="1">Belongs to the tryptophan 2,3-dioxygenase family.</text>
</comment>
<organism>
    <name type="scientific">Drosophila erecta</name>
    <name type="common">Fruit fly</name>
    <dbReference type="NCBI Taxonomy" id="7220"/>
    <lineage>
        <taxon>Eukaryota</taxon>
        <taxon>Metazoa</taxon>
        <taxon>Ecdysozoa</taxon>
        <taxon>Arthropoda</taxon>
        <taxon>Hexapoda</taxon>
        <taxon>Insecta</taxon>
        <taxon>Pterygota</taxon>
        <taxon>Neoptera</taxon>
        <taxon>Endopterygota</taxon>
        <taxon>Diptera</taxon>
        <taxon>Brachycera</taxon>
        <taxon>Muscomorpha</taxon>
        <taxon>Ephydroidea</taxon>
        <taxon>Drosophilidae</taxon>
        <taxon>Drosophila</taxon>
        <taxon>Sophophora</taxon>
    </lineage>
</organism>
<evidence type="ECO:0000255" key="1">
    <source>
        <dbReference type="HAMAP-Rule" id="MF_03020"/>
    </source>
</evidence>
<name>T23O_DROER</name>
<feature type="chain" id="PRO_0000360875" description="Tryptophan 2,3-dioxygenase">
    <location>
        <begin position="1"/>
        <end position="379"/>
    </location>
</feature>
<feature type="binding site" evidence="1">
    <location>
        <begin position="57"/>
        <end position="61"/>
    </location>
    <ligand>
        <name>substrate</name>
    </ligand>
</feature>
<feature type="binding site" evidence="1">
    <location>
        <position position="128"/>
    </location>
    <ligand>
        <name>substrate</name>
    </ligand>
</feature>
<feature type="binding site" description="axial binding residue" evidence="1">
    <location>
        <position position="312"/>
    </location>
    <ligand>
        <name>heme</name>
        <dbReference type="ChEBI" id="CHEBI:30413"/>
    </ligand>
    <ligandPart>
        <name>Fe</name>
        <dbReference type="ChEBI" id="CHEBI:18248"/>
    </ligandPart>
</feature>
<feature type="binding site" evidence="1">
    <location>
        <position position="327"/>
    </location>
    <ligand>
        <name>substrate</name>
    </ligand>
</feature>
<gene>
    <name evidence="1" type="primary">v</name>
    <name type="ORF">GG18380</name>
</gene>
<accession>B3NVC6</accession>
<sequence>MSCPYAGNGNDHDDSAVPLTTEVGKIYGEYLMLDKLLDAQCMLSEEDKRPVHDEHLFIITHQAYELWFKQIIFEFDSIRDMLDAEVIDETKTLEIVKRLNRVVLILKLLVDQVPILETMTPLDFMDFRKYLAPASGFQSLQFRLIENKLGVLTEQRVRYNQKYSDVFSDEEARNSIRNSEKDPSLLELVQRWLERTPGLEESGFNFWAKFQESVDRFLEAQVQSAMMEPVEKAKNYRLMDIEKRREVYRSIFDPAVHDALVRRGDRRFSHRALQGAIMITFYRDEPRFSQPHQLLTLLMDIDSLITKWRYNHVIMVQRMIGSQQLGTGGSSGYQYLRSTLSDRYKVFLDLFNLSTFLIPREAIPPLDETIRRKLVHKSV</sequence>